<organism>
    <name type="scientific">Homo sapiens</name>
    <name type="common">Human</name>
    <dbReference type="NCBI Taxonomy" id="9606"/>
    <lineage>
        <taxon>Eukaryota</taxon>
        <taxon>Metazoa</taxon>
        <taxon>Chordata</taxon>
        <taxon>Craniata</taxon>
        <taxon>Vertebrata</taxon>
        <taxon>Euteleostomi</taxon>
        <taxon>Mammalia</taxon>
        <taxon>Eutheria</taxon>
        <taxon>Euarchontoglires</taxon>
        <taxon>Primates</taxon>
        <taxon>Haplorrhini</taxon>
        <taxon>Catarrhini</taxon>
        <taxon>Hominidae</taxon>
        <taxon>Homo</taxon>
    </lineage>
</organism>
<protein>
    <recommendedName>
        <fullName>U3 small nucleolar ribonucleoprotein protein MPP10</fullName>
    </recommendedName>
    <alternativeName>
        <fullName>M phase phosphoprotein 10</fullName>
    </alternativeName>
</protein>
<sequence>MAPQVWRRRTLERCLTEVGKATGRPECFLTIQEGLASKFTSLTKVLYDFNKILENGRIHGSPLQKLVIENFDDEQIWQQLELQNEPILQYFQNAVSETINDEDISLLPESEEQEREEDGSEIEADDKEDLEDLEEEEVSDMGNDDPEMGERAENSSKSDLRKSPVFSDEDSDLDFDISKLEQQSKVQNKGQGKPREKSIVDDKFFKLSEMEAYLENIEKEEERKDDNDEEEEDIDFFEDIDSDEDEGGLFGSKKLKSGKSSRNLKYKDFFDPVESDEDITNVHDDELDSNKEDDEIAEEEAEELSISETDEDDDLQENEDNKQHKESLKRVTFALPDDAETEDTGVLNVKKNSDEVKSSFEKRQEKMNEKIASLEKELLEKKPWQLQGEVTAQKRPENSLLEETLHFDHAVRMAPVITEETTLQLEDIIKQRIRDQAWDDVVRKEKPKEDAYEYKKRLTLDHEKSKLSLAEIYEQEYIKLNQQKTAEEENPEHVEIQKMMDSLFLKLDALSNFHFIPKPPVPEIKVVSNLPAITMEEVAPVSVSDAALLAPEEIKEKNKAGDIKTAAEKTATDKKRERRKKKYQKRMKIKEKEKRRKLLEKSSVDQAGKYSKTVASEKLKQLTKTGKASFIKDEGKDKALKSSQAFFSKLQDQVKMQINDAKKTEKKKKKRQDISVHKLKL</sequence>
<name>MPP10_HUMAN</name>
<accession>O00566</accession>
<accession>A0AVJ8</accession>
<reference key="1">
    <citation type="journal article" date="1996" name="Mol. Biol. Cell">
        <title>Identification of novel M phase phosphoproteins by expression cloning.</title>
        <authorList>
            <person name="Matsumoto-Taniura N."/>
            <person name="Pirollet F."/>
            <person name="Monroe R."/>
            <person name="Gerace L."/>
            <person name="Westendorf J.M."/>
        </authorList>
    </citation>
    <scope>NUCLEOTIDE SEQUENCE [MRNA] OF 10-681</scope>
    <source>
        <tissue>Blood</tissue>
    </source>
</reference>
<reference key="2">
    <citation type="journal article" date="1998" name="Mol. Biol. Cell">
        <title>M phase phosphoprotein 10 is a human U3 small nucleolar ribonucleoprotein component.</title>
        <authorList>
            <person name="Westendorf J.M."/>
            <person name="Konstantinov K.N."/>
            <person name="Wormsley S."/>
            <person name="Shu M.-D."/>
            <person name="Matsumoto-Taniura N."/>
            <person name="Pirollet F."/>
            <person name="Klier F.G."/>
            <person name="Gerace L."/>
            <person name="Baserga S.J."/>
        </authorList>
    </citation>
    <scope>NUCLEOTIDE SEQUENCE [MRNA]</scope>
    <scope>SUBCELLULAR LOCATION</scope>
    <source>
        <tissue>Mammary cancer</tissue>
        <tissue>Placenta</tissue>
    </source>
</reference>
<reference key="3">
    <citation type="journal article" date="2004" name="Genome Res.">
        <title>The status, quality, and expansion of the NIH full-length cDNA project: the Mammalian Gene Collection (MGC).</title>
        <authorList>
            <consortium name="The MGC Project Team"/>
        </authorList>
    </citation>
    <scope>NUCLEOTIDE SEQUENCE [LARGE SCALE MRNA]</scope>
    <source>
        <tissue>Brain</tissue>
    </source>
</reference>
<reference key="4">
    <citation type="journal article" date="2002" name="Mol. Biol. Cell">
        <title>Functional proteomic analysis of human nucleolus.</title>
        <authorList>
            <person name="Scherl A."/>
            <person name="Coute Y."/>
            <person name="Deon C."/>
            <person name="Calle A."/>
            <person name="Kindbeiter K."/>
            <person name="Sanchez J.-C."/>
            <person name="Greco A."/>
            <person name="Hochstrasser D.F."/>
            <person name="Diaz J.-J."/>
        </authorList>
    </citation>
    <scope>SUBCELLULAR LOCATION [LARGE SCALE ANALYSIS]</scope>
    <source>
        <tissue>Cervix carcinoma</tissue>
    </source>
</reference>
<reference key="5">
    <citation type="journal article" date="2003" name="Nucleic Acids Res.">
        <title>The human Imp3 and Imp4 proteins form a ternary complex with hMpp10, which only interacts with the U3 snoRNA in 60-80S ribonucleoprotein complexes.</title>
        <authorList>
            <person name="Granneman S."/>
            <person name="Gallagher J.E.G."/>
            <person name="Vogelzangs J."/>
            <person name="Horstman W."/>
            <person name="van Venrooij W.J."/>
            <person name="Baserga S.J."/>
            <person name="Pruijn G.J.M."/>
        </authorList>
    </citation>
    <scope>SUBCELLULAR LOCATION</scope>
    <scope>INTERACTION WITH IMP3 AND IMP4</scope>
    <scope>FUNCTION</scope>
</reference>
<reference key="6">
    <citation type="journal article" date="2006" name="Cell">
        <title>Global, in vivo, and site-specific phosphorylation dynamics in signaling networks.</title>
        <authorList>
            <person name="Olsen J.V."/>
            <person name="Blagoev B."/>
            <person name="Gnad F."/>
            <person name="Macek B."/>
            <person name="Kumar C."/>
            <person name="Mortensen P."/>
            <person name="Mann M."/>
        </authorList>
    </citation>
    <scope>PHOSPHORYLATION [LARGE SCALE ANALYSIS] AT SER-163; SER-167; SER-171; SER-242; SER-275 AND SER-289</scope>
    <scope>IDENTIFICATION BY MASS SPECTROMETRY [LARGE SCALE ANALYSIS]</scope>
    <source>
        <tissue>Cervix carcinoma</tissue>
    </source>
</reference>
<reference key="7">
    <citation type="journal article" date="2008" name="Proc. Natl. Acad. Sci. U.S.A.">
        <title>A quantitative atlas of mitotic phosphorylation.</title>
        <authorList>
            <person name="Dephoure N."/>
            <person name="Zhou C."/>
            <person name="Villen J."/>
            <person name="Beausoleil S.A."/>
            <person name="Bakalarski C.E."/>
            <person name="Elledge S.J."/>
            <person name="Gygi S.P."/>
        </authorList>
    </citation>
    <scope>PHOSPHORYLATION [LARGE SCALE ANALYSIS] AT SER-163; SER-167; SER-171 AND SER-242</scope>
    <scope>IDENTIFICATION BY MASS SPECTROMETRY [LARGE SCALE ANALYSIS]</scope>
    <source>
        <tissue>Cervix carcinoma</tissue>
    </source>
</reference>
<reference key="8">
    <citation type="journal article" date="2009" name="Sci. Signal.">
        <title>Quantitative phosphoproteomic analysis of T cell receptor signaling reveals system-wide modulation of protein-protein interactions.</title>
        <authorList>
            <person name="Mayya V."/>
            <person name="Lundgren D.H."/>
            <person name="Hwang S.-I."/>
            <person name="Rezaul K."/>
            <person name="Wu L."/>
            <person name="Eng J.K."/>
            <person name="Rodionov V."/>
            <person name="Han D.K."/>
        </authorList>
    </citation>
    <scope>PHOSPHORYLATION [LARGE SCALE ANALYSIS] AT SER-167; SER-171 AND SER-242</scope>
    <scope>IDENTIFICATION BY MASS SPECTROMETRY [LARGE SCALE ANALYSIS]</scope>
    <source>
        <tissue>Leukemic T-cell</tissue>
    </source>
</reference>
<reference key="9">
    <citation type="journal article" date="2009" name="Science">
        <title>Lysine acetylation targets protein complexes and co-regulates major cellular functions.</title>
        <authorList>
            <person name="Choudhary C."/>
            <person name="Kumar C."/>
            <person name="Gnad F."/>
            <person name="Nielsen M.L."/>
            <person name="Rehman M."/>
            <person name="Walther T.C."/>
            <person name="Olsen J.V."/>
            <person name="Mann M."/>
        </authorList>
    </citation>
    <scope>ACETYLATION [LARGE SCALE ANALYSIS] AT LYS-609</scope>
    <scope>IDENTIFICATION BY MASS SPECTROMETRY [LARGE SCALE ANALYSIS]</scope>
</reference>
<reference key="10">
    <citation type="journal article" date="2010" name="Sci. Signal.">
        <title>Quantitative phosphoproteomics reveals widespread full phosphorylation site occupancy during mitosis.</title>
        <authorList>
            <person name="Olsen J.V."/>
            <person name="Vermeulen M."/>
            <person name="Santamaria A."/>
            <person name="Kumar C."/>
            <person name="Miller M.L."/>
            <person name="Jensen L.J."/>
            <person name="Gnad F."/>
            <person name="Cox J."/>
            <person name="Jensen T.S."/>
            <person name="Nigg E.A."/>
            <person name="Brunak S."/>
            <person name="Mann M."/>
        </authorList>
    </citation>
    <scope>PHOSPHORYLATION [LARGE SCALE ANALYSIS] AT SER-120; SER-139; SER-163; SER-167; SER-171 AND SER-242</scope>
    <scope>IDENTIFICATION BY MASS SPECTROMETRY [LARGE SCALE ANALYSIS]</scope>
    <source>
        <tissue>Cervix carcinoma</tissue>
    </source>
</reference>
<reference key="11">
    <citation type="journal article" date="2011" name="Sci. Signal.">
        <title>System-wide temporal characterization of the proteome and phosphoproteome of human embryonic stem cell differentiation.</title>
        <authorList>
            <person name="Rigbolt K.T."/>
            <person name="Prokhorova T.A."/>
            <person name="Akimov V."/>
            <person name="Henningsen J."/>
            <person name="Johansen P.T."/>
            <person name="Kratchmarova I."/>
            <person name="Kassem M."/>
            <person name="Mann M."/>
            <person name="Olsen J.V."/>
            <person name="Blagoev B."/>
        </authorList>
    </citation>
    <scope>PHOSPHORYLATION [LARGE SCALE ANALYSIS] AT SER-120; SER-139; SER-163; SER-167; SER-171; SER-242; SER-275 AND SER-289</scope>
    <scope>IDENTIFICATION BY MASS SPECTROMETRY [LARGE SCALE ANALYSIS]</scope>
</reference>
<reference key="12">
    <citation type="journal article" date="2013" name="J. Proteome Res.">
        <title>Toward a comprehensive characterization of a human cancer cell phosphoproteome.</title>
        <authorList>
            <person name="Zhou H."/>
            <person name="Di Palma S."/>
            <person name="Preisinger C."/>
            <person name="Peng M."/>
            <person name="Polat A.N."/>
            <person name="Heck A.J."/>
            <person name="Mohammed S."/>
        </authorList>
    </citation>
    <scope>PHOSPHORYLATION [LARGE SCALE ANALYSIS] AT SER-167 AND SER-171</scope>
    <scope>IDENTIFICATION BY MASS SPECTROMETRY [LARGE SCALE ANALYSIS]</scope>
    <source>
        <tissue>Erythroleukemia</tissue>
    </source>
</reference>
<reference key="13">
    <citation type="journal article" date="2014" name="J. Proteomics">
        <title>An enzyme assisted RP-RPLC approach for in-depth analysis of human liver phosphoproteome.</title>
        <authorList>
            <person name="Bian Y."/>
            <person name="Song C."/>
            <person name="Cheng K."/>
            <person name="Dong M."/>
            <person name="Wang F."/>
            <person name="Huang J."/>
            <person name="Sun D."/>
            <person name="Wang L."/>
            <person name="Ye M."/>
            <person name="Zou H."/>
        </authorList>
    </citation>
    <scope>PHOSPHORYLATION [LARGE SCALE ANALYSIS] AT SER-163; SER-167 AND SER-171</scope>
    <scope>IDENTIFICATION BY MASS SPECTROMETRY [LARGE SCALE ANALYSIS]</scope>
    <source>
        <tissue>Liver</tissue>
    </source>
</reference>
<reference key="14">
    <citation type="journal article" date="2014" name="Nat. Struct. Mol. Biol.">
        <title>Uncovering global SUMOylation signaling networks in a site-specific manner.</title>
        <authorList>
            <person name="Hendriks I.A."/>
            <person name="D'Souza R.C."/>
            <person name="Yang B."/>
            <person name="Verlaan-de Vries M."/>
            <person name="Mann M."/>
            <person name="Vertegaal A.C."/>
        </authorList>
    </citation>
    <scope>SUMOYLATION [LARGE SCALE ANALYSIS] AT LYS-382 AND LYS-632</scope>
    <scope>IDENTIFICATION BY MASS SPECTROMETRY [LARGE SCALE ANALYSIS]</scope>
</reference>
<reference key="15">
    <citation type="journal article" date="2015" name="Mol. Cell. Proteomics">
        <title>System-wide analysis of SUMOylation dynamics in response to replication stress reveals novel small ubiquitin-like modified target proteins and acceptor lysines relevant for genome stability.</title>
        <authorList>
            <person name="Xiao Z."/>
            <person name="Chang J.G."/>
            <person name="Hendriks I.A."/>
            <person name="Sigurdsson J.O."/>
            <person name="Olsen J.V."/>
            <person name="Vertegaal A.C."/>
        </authorList>
    </citation>
    <scope>SUMOYLATION [LARGE SCALE ANALYSIS] AT LYS-632</scope>
    <scope>IDENTIFICATION BY MASS SPECTROMETRY [LARGE SCALE ANALYSIS]</scope>
</reference>
<reference key="16">
    <citation type="journal article" date="2017" name="Nat. Struct. Mol. Biol.">
        <title>Site-specific mapping of the human SUMO proteome reveals co-modification with phosphorylation.</title>
        <authorList>
            <person name="Hendriks I.A."/>
            <person name="Lyon D."/>
            <person name="Young C."/>
            <person name="Jensen L.J."/>
            <person name="Vertegaal A.C."/>
            <person name="Nielsen M.L."/>
        </authorList>
    </citation>
    <scope>SUMOYLATION [LARGE SCALE ANALYSIS] AT LYS-350; LYS-382; LYS-394; LYS-555; LYS-632 AND LYS-649</scope>
    <scope>IDENTIFICATION BY MASS SPECTROMETRY [LARGE SCALE ANALYSIS]</scope>
</reference>
<reference evidence="9 10 11" key="17">
    <citation type="journal article" date="2021" name="Science">
        <title>Nucleolar maturation of the human small subunit processome.</title>
        <authorList>
            <person name="Singh S."/>
            <person name="Vanden Broeck A."/>
            <person name="Miller L."/>
            <person name="Chaker-Margot M."/>
            <person name="Klinge S."/>
        </authorList>
    </citation>
    <scope>STRUCTURE BY ELECTRON MICROSCOPY (2.70 ANGSTROMS)</scope>
    <scope>FUNCTION</scope>
    <scope>SUBUNIT</scope>
    <scope>SUBCELLULAR LOCATION</scope>
</reference>
<comment type="function">
    <text evidence="4 5">Component of the 60-80S U3 small nucleolar ribonucleoprotein (U3 snoRNP). Required for the early cleavages during pre-18S ribosomal RNA processing (PubMed:12655004). Part of the small subunit (SSU) processome, first precursor of the small eukaryotic ribosomal subunit. During the assembly of the SSU processome in the nucleolus, many ribosome biogenesis factors, an RNA chaperone and ribosomal proteins associate with the nascent pre-rRNA and work in concert to generate RNA folding, modifications, rearrangements and cleavage as well as targeted degradation of pre-ribosomal RNA by the RNA exosome (PubMed:34516797).</text>
</comment>
<comment type="subunit">
    <text evidence="4 5">Part of the small subunit (SSU) processome, composed of more than 70 proteins and the RNA chaperone small nucleolar RNA (snoRNA) U3 (PubMed:34516797). Component of a heterotrimeric complex containing IMP3, IMP4 and MPHOSPH10. Interacts with IMP3 and IMP4 (PubMed:12655004).</text>
</comment>
<comment type="interaction">
    <interactant intactId="EBI-5235884">
        <id>O00566</id>
    </interactant>
    <interactant intactId="EBI-358049">
        <id>Q13895</id>
        <label>BYSL</label>
    </interactant>
    <organismsDiffer>false</organismsDiffer>
    <experiments>3</experiments>
</comment>
<comment type="interaction">
    <interactant intactId="EBI-5235884">
        <id>O00566</id>
    </interactant>
    <interactant intactId="EBI-11962928">
        <id>Q9UI47-2</id>
        <label>CTNNA3</label>
    </interactant>
    <organismsDiffer>false</organismsDiffer>
    <experiments>3</experiments>
</comment>
<comment type="interaction">
    <interactant intactId="EBI-5235884">
        <id>O00566</id>
    </interactant>
    <interactant intactId="EBI-747481">
        <id>Q9NV31</id>
        <label>IMP3</label>
    </interactant>
    <organismsDiffer>false</organismsDiffer>
    <experiments>5</experiments>
</comment>
<comment type="interaction">
    <interactant intactId="EBI-5235884">
        <id>O00566</id>
    </interactant>
    <interactant intactId="EBI-8641721">
        <id>Q96G21</id>
        <label>IMP4</label>
    </interactant>
    <organismsDiffer>false</organismsDiffer>
    <experiments>3</experiments>
</comment>
<comment type="interaction">
    <interactant intactId="EBI-5235884">
        <id>O00566</id>
    </interactant>
    <interactant intactId="EBI-10288852">
        <id>Q9UBU8-2</id>
        <label>MORF4L1</label>
    </interactant>
    <organismsDiffer>false</organismsDiffer>
    <experiments>3</experiments>
</comment>
<comment type="interaction">
    <interactant intactId="EBI-5235884">
        <id>O00566</id>
    </interactant>
    <interactant intactId="EBI-357253">
        <id>P62136</id>
        <label>PPP1CA</label>
    </interactant>
    <organismsDiffer>false</organismsDiffer>
    <experiments>2</experiments>
</comment>
<comment type="interaction">
    <interactant intactId="EBI-5235884">
        <id>O00566</id>
    </interactant>
    <interactant intactId="EBI-25475874">
        <id>PRO_0000449626</id>
        <label>rep</label>
        <dbReference type="UniProtKB" id="P0DTD1"/>
    </interactant>
    <organismsDiffer>true</organismsDiffer>
    <experiments>3</experiments>
</comment>
<comment type="subcellular location">
    <subcellularLocation>
        <location evidence="3 4 5 6">Nucleus</location>
        <location evidence="3 4 5 6">Nucleolus</location>
    </subcellularLocation>
    <subcellularLocation>
        <location evidence="6">Chromosome</location>
    </subcellularLocation>
    <text evidence="6">Fibrillar region of the nucleolus (PubMed:9450966). After dissolution of the nucleolus in early M phase becomes associated with chromosomes through metaphase and anaphase (PubMed:9450966). In telophase localized to small cellular prenucleolar bodies that not always contain fibrillarin (PubMed:9450966). The reassociation with nucleolus is preceeded by the arrival of fibrillarin (PubMed:9450966).</text>
</comment>
<comment type="PTM">
    <text>Phosphorylated in M (mitotic) phase.</text>
</comment>
<comment type="similarity">
    <text evidence="7">Belongs to the MPP10 family.</text>
</comment>
<keyword id="KW-0002">3D-structure</keyword>
<keyword id="KW-0007">Acetylation</keyword>
<keyword id="KW-0158">Chromosome</keyword>
<keyword id="KW-0175">Coiled coil</keyword>
<keyword id="KW-1017">Isopeptide bond</keyword>
<keyword id="KW-0539">Nucleus</keyword>
<keyword id="KW-0597">Phosphoprotein</keyword>
<keyword id="KW-1267">Proteomics identification</keyword>
<keyword id="KW-1185">Reference proteome</keyword>
<keyword id="KW-0687">Ribonucleoprotein</keyword>
<keyword id="KW-0690">Ribosome biogenesis</keyword>
<keyword id="KW-0698">rRNA processing</keyword>
<keyword id="KW-0832">Ubl conjugation</keyword>
<evidence type="ECO:0000255" key="1"/>
<evidence type="ECO:0000256" key="2">
    <source>
        <dbReference type="SAM" id="MobiDB-lite"/>
    </source>
</evidence>
<evidence type="ECO:0000269" key="3">
    <source>
    </source>
</evidence>
<evidence type="ECO:0000269" key="4">
    <source>
    </source>
</evidence>
<evidence type="ECO:0000269" key="5">
    <source>
    </source>
</evidence>
<evidence type="ECO:0000269" key="6">
    <source>
    </source>
</evidence>
<evidence type="ECO:0000305" key="7"/>
<evidence type="ECO:0000312" key="8">
    <source>
        <dbReference type="HGNC" id="HGNC:7213"/>
    </source>
</evidence>
<evidence type="ECO:0007744" key="9">
    <source>
        <dbReference type="PDB" id="7MQ8"/>
    </source>
</evidence>
<evidence type="ECO:0007744" key="10">
    <source>
        <dbReference type="PDB" id="7MQ9"/>
    </source>
</evidence>
<evidence type="ECO:0007744" key="11">
    <source>
        <dbReference type="PDB" id="7MQA"/>
    </source>
</evidence>
<evidence type="ECO:0007744" key="12">
    <source>
    </source>
</evidence>
<evidence type="ECO:0007744" key="13">
    <source>
    </source>
</evidence>
<evidence type="ECO:0007744" key="14">
    <source>
    </source>
</evidence>
<evidence type="ECO:0007744" key="15">
    <source>
    </source>
</evidence>
<evidence type="ECO:0007744" key="16">
    <source>
    </source>
</evidence>
<evidence type="ECO:0007744" key="17">
    <source>
    </source>
</evidence>
<evidence type="ECO:0007744" key="18">
    <source>
    </source>
</evidence>
<evidence type="ECO:0007744" key="19">
    <source>
    </source>
</evidence>
<evidence type="ECO:0007744" key="20">
    <source>
    </source>
</evidence>
<evidence type="ECO:0007744" key="21">
    <source>
    </source>
</evidence>
<evidence type="ECO:0007744" key="22">
    <source>
    </source>
</evidence>
<dbReference type="EMBL" id="X98494">
    <property type="protein sequence ID" value="CAA67120.1"/>
    <property type="molecule type" value="mRNA"/>
</dbReference>
<dbReference type="EMBL" id="BC126389">
    <property type="protein sequence ID" value="AAI26390.1"/>
    <property type="molecule type" value="mRNA"/>
</dbReference>
<dbReference type="CCDS" id="CCDS1916.1"/>
<dbReference type="RefSeq" id="NP_005782.1">
    <property type="nucleotide sequence ID" value="NM_005791.3"/>
</dbReference>
<dbReference type="PDB" id="7MQ8">
    <property type="method" value="EM"/>
    <property type="resolution" value="3.60 A"/>
    <property type="chains" value="NA=1-681"/>
</dbReference>
<dbReference type="PDB" id="7MQ9">
    <property type="method" value="EM"/>
    <property type="resolution" value="3.87 A"/>
    <property type="chains" value="NA=1-681"/>
</dbReference>
<dbReference type="PDB" id="7MQA">
    <property type="method" value="EM"/>
    <property type="resolution" value="2.70 A"/>
    <property type="chains" value="NA=1-681"/>
</dbReference>
<dbReference type="PDBsum" id="7MQ8"/>
<dbReference type="PDBsum" id="7MQ9"/>
<dbReference type="PDBsum" id="7MQA"/>
<dbReference type="EMDB" id="EMD-23936"/>
<dbReference type="EMDB" id="EMD-23937"/>
<dbReference type="EMDB" id="EMD-23938"/>
<dbReference type="SMR" id="O00566"/>
<dbReference type="BioGRID" id="115494">
    <property type="interactions" value="211"/>
</dbReference>
<dbReference type="ComplexPortal" id="CPX-2478">
    <property type="entry name" value="MPP10 complex"/>
</dbReference>
<dbReference type="CORUM" id="O00566"/>
<dbReference type="FunCoup" id="O00566">
    <property type="interactions" value="3051"/>
</dbReference>
<dbReference type="IntAct" id="O00566">
    <property type="interactions" value="105"/>
</dbReference>
<dbReference type="MINT" id="O00566"/>
<dbReference type="STRING" id="9606.ENSP00000244230"/>
<dbReference type="GlyGen" id="O00566">
    <property type="glycosylation" value="5 sites, 1 N-linked glycan (1 site), 1 O-linked glycan (4 sites)"/>
</dbReference>
<dbReference type="iPTMnet" id="O00566"/>
<dbReference type="PhosphoSitePlus" id="O00566"/>
<dbReference type="SwissPalm" id="O00566"/>
<dbReference type="BioMuta" id="MPHOSPH10"/>
<dbReference type="jPOST" id="O00566"/>
<dbReference type="MassIVE" id="O00566"/>
<dbReference type="PaxDb" id="9606-ENSP00000244230"/>
<dbReference type="PeptideAtlas" id="O00566"/>
<dbReference type="ProteomicsDB" id="47979"/>
<dbReference type="Pumba" id="O00566"/>
<dbReference type="Antibodypedia" id="31197">
    <property type="antibodies" value="135 antibodies from 24 providers"/>
</dbReference>
<dbReference type="DNASU" id="10199"/>
<dbReference type="Ensembl" id="ENST00000244230.7">
    <property type="protein sequence ID" value="ENSP00000244230.2"/>
    <property type="gene ID" value="ENSG00000124383.11"/>
</dbReference>
<dbReference type="GeneID" id="10199"/>
<dbReference type="KEGG" id="hsa:10199"/>
<dbReference type="MANE-Select" id="ENST00000244230.7">
    <property type="protein sequence ID" value="ENSP00000244230.2"/>
    <property type="RefSeq nucleotide sequence ID" value="NM_005791.3"/>
    <property type="RefSeq protein sequence ID" value="NP_005782.1"/>
</dbReference>
<dbReference type="UCSC" id="uc002sht.3">
    <property type="organism name" value="human"/>
</dbReference>
<dbReference type="AGR" id="HGNC:7213"/>
<dbReference type="CTD" id="10199"/>
<dbReference type="DisGeNET" id="10199"/>
<dbReference type="GeneCards" id="MPHOSPH10"/>
<dbReference type="HGNC" id="HGNC:7213">
    <property type="gene designation" value="MPHOSPH10"/>
</dbReference>
<dbReference type="HPA" id="ENSG00000124383">
    <property type="expression patterns" value="Low tissue specificity"/>
</dbReference>
<dbReference type="MIM" id="605503">
    <property type="type" value="gene"/>
</dbReference>
<dbReference type="neXtProt" id="NX_O00566"/>
<dbReference type="OpenTargets" id="ENSG00000124383"/>
<dbReference type="PharmGKB" id="PA30919"/>
<dbReference type="VEuPathDB" id="HostDB:ENSG00000124383"/>
<dbReference type="eggNOG" id="KOG2600">
    <property type="taxonomic scope" value="Eukaryota"/>
</dbReference>
<dbReference type="GeneTree" id="ENSGT00390000011359"/>
<dbReference type="HOGENOM" id="CLU_011271_3_1_1"/>
<dbReference type="InParanoid" id="O00566"/>
<dbReference type="OMA" id="HFAEDFG"/>
<dbReference type="OrthoDB" id="445326at2759"/>
<dbReference type="PAN-GO" id="O00566">
    <property type="GO annotations" value="2 GO annotations based on evolutionary models"/>
</dbReference>
<dbReference type="PhylomeDB" id="O00566"/>
<dbReference type="TreeFam" id="TF105794"/>
<dbReference type="PathwayCommons" id="O00566"/>
<dbReference type="Reactome" id="R-HSA-6790901">
    <property type="pathway name" value="rRNA modification in the nucleus and cytosol"/>
</dbReference>
<dbReference type="Reactome" id="R-HSA-6791226">
    <property type="pathway name" value="Major pathway of rRNA processing in the nucleolus and cytosol"/>
</dbReference>
<dbReference type="SignaLink" id="O00566"/>
<dbReference type="SIGNOR" id="O00566"/>
<dbReference type="BioGRID-ORCS" id="10199">
    <property type="hits" value="756 hits in 1165 CRISPR screens"/>
</dbReference>
<dbReference type="CD-CODE" id="91857CE7">
    <property type="entry name" value="Nucleolus"/>
</dbReference>
<dbReference type="ChiTaRS" id="MPHOSPH10">
    <property type="organism name" value="human"/>
</dbReference>
<dbReference type="GeneWiki" id="MPHOSPH10"/>
<dbReference type="GenomeRNAi" id="10199"/>
<dbReference type="Pharos" id="O00566">
    <property type="development level" value="Tbio"/>
</dbReference>
<dbReference type="PRO" id="PR:O00566"/>
<dbReference type="Proteomes" id="UP000005640">
    <property type="component" value="Chromosome 2"/>
</dbReference>
<dbReference type="RNAct" id="O00566">
    <property type="molecule type" value="protein"/>
</dbReference>
<dbReference type="Bgee" id="ENSG00000124383">
    <property type="expression patterns" value="Expressed in calcaneal tendon and 212 other cell types or tissues"/>
</dbReference>
<dbReference type="ExpressionAtlas" id="O00566">
    <property type="expression patterns" value="baseline and differential"/>
</dbReference>
<dbReference type="GO" id="GO:0005694">
    <property type="term" value="C:chromosome"/>
    <property type="evidence" value="ECO:0000314"/>
    <property type="project" value="HPA"/>
</dbReference>
<dbReference type="GO" id="GO:0034457">
    <property type="term" value="C:Mpp10 complex"/>
    <property type="evidence" value="ECO:0000353"/>
    <property type="project" value="ComplexPortal"/>
</dbReference>
<dbReference type="GO" id="GO:0005730">
    <property type="term" value="C:nucleolus"/>
    <property type="evidence" value="ECO:0000314"/>
    <property type="project" value="UniProtKB"/>
</dbReference>
<dbReference type="GO" id="GO:0005654">
    <property type="term" value="C:nucleoplasm"/>
    <property type="evidence" value="ECO:0000304"/>
    <property type="project" value="Reactome"/>
</dbReference>
<dbReference type="GO" id="GO:0032040">
    <property type="term" value="C:small-subunit processome"/>
    <property type="evidence" value="ECO:0000314"/>
    <property type="project" value="UniProtKB"/>
</dbReference>
<dbReference type="GO" id="GO:0005732">
    <property type="term" value="C:sno(s)RNA-containing ribonucleoprotein complex"/>
    <property type="evidence" value="ECO:0000303"/>
    <property type="project" value="UniProtKB"/>
</dbReference>
<dbReference type="GO" id="GO:0003723">
    <property type="term" value="F:RNA binding"/>
    <property type="evidence" value="ECO:0007005"/>
    <property type="project" value="UniProtKB"/>
</dbReference>
<dbReference type="GO" id="GO:0030490">
    <property type="term" value="P:maturation of SSU-rRNA"/>
    <property type="evidence" value="ECO:0000303"/>
    <property type="project" value="ComplexPortal"/>
</dbReference>
<dbReference type="GO" id="GO:0042274">
    <property type="term" value="P:ribosomal small subunit biogenesis"/>
    <property type="evidence" value="ECO:0000314"/>
    <property type="project" value="UniProtKB"/>
</dbReference>
<dbReference type="GO" id="GO:0006396">
    <property type="term" value="P:RNA processing"/>
    <property type="evidence" value="ECO:0000303"/>
    <property type="project" value="UniProtKB"/>
</dbReference>
<dbReference type="GO" id="GO:0008380">
    <property type="term" value="P:RNA splicing"/>
    <property type="evidence" value="ECO:0000303"/>
    <property type="project" value="UniProtKB"/>
</dbReference>
<dbReference type="GO" id="GO:0000375">
    <property type="term" value="P:RNA splicing, via transesterification reactions"/>
    <property type="evidence" value="ECO:0000303"/>
    <property type="project" value="UniProtKB"/>
</dbReference>
<dbReference type="InterPro" id="IPR012173">
    <property type="entry name" value="Mpp10"/>
</dbReference>
<dbReference type="PANTHER" id="PTHR17039">
    <property type="entry name" value="U3 SMALL NUCLEOLAR RIBONUCLEOPROTEIN PROTEIN MPP10"/>
    <property type="match status" value="1"/>
</dbReference>
<dbReference type="PANTHER" id="PTHR17039:SF0">
    <property type="entry name" value="U3 SMALL NUCLEOLAR RIBONUCLEOPROTEIN PROTEIN MPP10"/>
    <property type="match status" value="1"/>
</dbReference>
<dbReference type="Pfam" id="PF04006">
    <property type="entry name" value="Mpp10"/>
    <property type="match status" value="1"/>
</dbReference>
<dbReference type="PIRSF" id="PIRSF017300">
    <property type="entry name" value="snoRNP_Mpp10"/>
    <property type="match status" value="1"/>
</dbReference>
<proteinExistence type="evidence at protein level"/>
<gene>
    <name evidence="8" type="primary">MPHOSPH10</name>
    <name type="synonym">MPP10</name>
</gene>
<feature type="chain" id="PRO_0000121535" description="U3 small nucleolar ribonucleoprotein protein MPP10">
    <location>
        <begin position="1"/>
        <end position="681"/>
    </location>
</feature>
<feature type="region of interest" description="Disordered" evidence="2">
    <location>
        <begin position="105"/>
        <end position="202"/>
    </location>
</feature>
<feature type="region of interest" description="Disordered" evidence="2">
    <location>
        <begin position="216"/>
        <end position="364"/>
    </location>
</feature>
<feature type="region of interest" description="Disordered" evidence="2">
    <location>
        <begin position="558"/>
        <end position="606"/>
    </location>
</feature>
<feature type="region of interest" description="Disordered" evidence="2">
    <location>
        <begin position="660"/>
        <end position="681"/>
    </location>
</feature>
<feature type="coiled-coil region" evidence="1">
    <location>
        <begin position="109"/>
        <end position="138"/>
    </location>
</feature>
<feature type="coiled-coil region" evidence="1">
    <location>
        <begin position="205"/>
        <end position="239"/>
    </location>
</feature>
<feature type="coiled-coil region" evidence="1">
    <location>
        <begin position="284"/>
        <end position="324"/>
    </location>
</feature>
<feature type="coiled-coil region" evidence="1">
    <location>
        <begin position="348"/>
        <end position="382"/>
    </location>
</feature>
<feature type="coiled-coil region" evidence="1">
    <location>
        <begin position="469"/>
        <end position="490"/>
    </location>
</feature>
<feature type="coiled-coil region" evidence="1">
    <location>
        <begin position="574"/>
        <end position="604"/>
    </location>
</feature>
<feature type="coiled-coil region" evidence="1">
    <location>
        <begin position="648"/>
        <end position="670"/>
    </location>
</feature>
<feature type="compositionally biased region" description="Acidic residues" evidence="2">
    <location>
        <begin position="105"/>
        <end position="147"/>
    </location>
</feature>
<feature type="compositionally biased region" description="Basic and acidic residues" evidence="2">
    <location>
        <begin position="148"/>
        <end position="162"/>
    </location>
</feature>
<feature type="compositionally biased region" description="Polar residues" evidence="2">
    <location>
        <begin position="180"/>
        <end position="190"/>
    </location>
</feature>
<feature type="compositionally biased region" description="Basic and acidic residues" evidence="2">
    <location>
        <begin position="193"/>
        <end position="202"/>
    </location>
</feature>
<feature type="compositionally biased region" description="Basic and acidic residues" evidence="2">
    <location>
        <begin position="216"/>
        <end position="226"/>
    </location>
</feature>
<feature type="compositionally biased region" description="Acidic residues" evidence="2">
    <location>
        <begin position="227"/>
        <end position="247"/>
    </location>
</feature>
<feature type="compositionally biased region" description="Basic residues" evidence="2">
    <location>
        <begin position="253"/>
        <end position="264"/>
    </location>
</feature>
<feature type="compositionally biased region" description="Basic and acidic residues" evidence="2">
    <location>
        <begin position="280"/>
        <end position="290"/>
    </location>
</feature>
<feature type="compositionally biased region" description="Acidic residues" evidence="2">
    <location>
        <begin position="291"/>
        <end position="318"/>
    </location>
</feature>
<feature type="compositionally biased region" description="Basic and acidic residues" evidence="2">
    <location>
        <begin position="319"/>
        <end position="329"/>
    </location>
</feature>
<feature type="compositionally biased region" description="Basic and acidic residues" evidence="2">
    <location>
        <begin position="351"/>
        <end position="364"/>
    </location>
</feature>
<feature type="compositionally biased region" description="Basic and acidic residues" evidence="2">
    <location>
        <begin position="558"/>
        <end position="575"/>
    </location>
</feature>
<feature type="compositionally biased region" description="Basic residues" evidence="2">
    <location>
        <begin position="576"/>
        <end position="598"/>
    </location>
</feature>
<feature type="compositionally biased region" description="Basic and acidic residues" evidence="2">
    <location>
        <begin position="672"/>
        <end position="681"/>
    </location>
</feature>
<feature type="modified residue" description="Phosphoserine" evidence="1">
    <location>
        <position position="61"/>
    </location>
</feature>
<feature type="modified residue" description="Phosphoserine" evidence="16 17">
    <location>
        <position position="120"/>
    </location>
</feature>
<feature type="modified residue" description="Phosphoserine" evidence="16 17">
    <location>
        <position position="139"/>
    </location>
</feature>
<feature type="modified residue" description="Phosphoserine" evidence="12 13 16 17 19">
    <location>
        <position position="163"/>
    </location>
</feature>
<feature type="modified residue" description="Phosphoserine" evidence="12 13 15 16 17 18 19">
    <location>
        <position position="167"/>
    </location>
</feature>
<feature type="modified residue" description="Phosphoserine" evidence="12 13 15 16 17 18 19">
    <location>
        <position position="171"/>
    </location>
</feature>
<feature type="modified residue" description="Phosphoserine" evidence="12 13 15 16 17">
    <location>
        <position position="242"/>
    </location>
</feature>
<feature type="modified residue" description="Phosphoserine" evidence="12 17">
    <location>
        <position position="275"/>
    </location>
</feature>
<feature type="modified residue" description="Phosphoserine" evidence="12 17">
    <location>
        <position position="289"/>
    </location>
</feature>
<feature type="modified residue" description="N6-acetyllysine" evidence="14">
    <location>
        <position position="609"/>
    </location>
</feature>
<feature type="cross-link" description="Glycyl lysine isopeptide (Lys-Gly) (interchain with G-Cter in SUMO2)" evidence="22">
    <location>
        <position position="350"/>
    </location>
</feature>
<feature type="cross-link" description="Glycyl lysine isopeptide (Lys-Gly) (interchain with G-Cter in SUMO2)" evidence="20 22">
    <location>
        <position position="382"/>
    </location>
</feature>
<feature type="cross-link" description="Glycyl lysine isopeptide (Lys-Gly) (interchain with G-Cter in SUMO2)" evidence="22">
    <location>
        <position position="394"/>
    </location>
</feature>
<feature type="cross-link" description="Glycyl lysine isopeptide (Lys-Gly) (interchain with G-Cter in SUMO2)" evidence="22">
    <location>
        <position position="555"/>
    </location>
</feature>
<feature type="cross-link" description="Glycyl lysine isopeptide (Lys-Gly) (interchain with G-Cter in SUMO2)" evidence="20 21 22">
    <location>
        <position position="632"/>
    </location>
</feature>
<feature type="cross-link" description="Glycyl lysine isopeptide (Lys-Gly) (interchain with G-Cter in SUMO2)" evidence="22">
    <location>
        <position position="649"/>
    </location>
</feature>
<feature type="sequence variant" id="VAR_053511" description="In dbSNP:rs10199088.">
    <original>E</original>
    <variation>A</variation>
    <location>
        <position position="69"/>
    </location>
</feature>
<feature type="sequence variant" id="VAR_053512" description="In dbSNP:rs13010513.">
    <original>R</original>
    <variation>H</variation>
    <location>
        <position position="115"/>
    </location>
</feature>
<feature type="sequence variant" id="VAR_053513" description="In dbSNP:rs10175940.">
    <original>D</original>
    <variation>N</variation>
    <location>
        <position position="140"/>
    </location>
</feature>
<feature type="sequence variant" id="VAR_024539" description="In dbSNP:rs1813160.">
    <original>E</original>
    <variation>D</variation>
    <location>
        <position position="229"/>
    </location>
</feature>
<feature type="sequence variant" id="VAR_022000" description="In dbSNP:rs3732240.">
    <original>L</original>
    <variation>M</variation>
    <location>
        <position position="425"/>
    </location>
</feature>
<feature type="sequence variant" id="VAR_014470" description="In dbSNP:rs6574.">
    <original>E</original>
    <variation>K</variation>
    <location>
        <position position="634"/>
    </location>
</feature>
<feature type="sequence variant" id="VAR_053514" description="In dbSNP:rs4852764.">
    <original>A</original>
    <variation>T</variation>
    <location>
        <position position="639"/>
    </location>
</feature>